<dbReference type="EC" id="2.5.1.39" evidence="1"/>
<dbReference type="EMBL" id="CP000094">
    <property type="protein sequence ID" value="ABA77341.1"/>
    <property type="molecule type" value="Genomic_DNA"/>
</dbReference>
<dbReference type="RefSeq" id="WP_011336607.1">
    <property type="nucleotide sequence ID" value="NC_007492.2"/>
</dbReference>
<dbReference type="SMR" id="Q3K4G3"/>
<dbReference type="KEGG" id="pfo:Pfl01_5604"/>
<dbReference type="eggNOG" id="COG0382">
    <property type="taxonomic scope" value="Bacteria"/>
</dbReference>
<dbReference type="HOGENOM" id="CLU_034879_1_0_6"/>
<dbReference type="UniPathway" id="UPA00232"/>
<dbReference type="Proteomes" id="UP000002704">
    <property type="component" value="Chromosome"/>
</dbReference>
<dbReference type="GO" id="GO:0005886">
    <property type="term" value="C:plasma membrane"/>
    <property type="evidence" value="ECO:0007669"/>
    <property type="project" value="UniProtKB-SubCell"/>
</dbReference>
<dbReference type="GO" id="GO:0008412">
    <property type="term" value="F:4-hydroxybenzoate polyprenyltransferase activity"/>
    <property type="evidence" value="ECO:0007669"/>
    <property type="project" value="UniProtKB-UniRule"/>
</dbReference>
<dbReference type="GO" id="GO:0006744">
    <property type="term" value="P:ubiquinone biosynthetic process"/>
    <property type="evidence" value="ECO:0007669"/>
    <property type="project" value="UniProtKB-UniRule"/>
</dbReference>
<dbReference type="CDD" id="cd13959">
    <property type="entry name" value="PT_UbiA_COQ2"/>
    <property type="match status" value="1"/>
</dbReference>
<dbReference type="FunFam" id="1.10.357.140:FF:000002">
    <property type="entry name" value="4-hydroxybenzoate octaprenyltransferase"/>
    <property type="match status" value="1"/>
</dbReference>
<dbReference type="FunFam" id="1.20.120.1780:FF:000001">
    <property type="entry name" value="4-hydroxybenzoate octaprenyltransferase"/>
    <property type="match status" value="1"/>
</dbReference>
<dbReference type="Gene3D" id="1.10.357.140">
    <property type="entry name" value="UbiA prenyltransferase"/>
    <property type="match status" value="1"/>
</dbReference>
<dbReference type="Gene3D" id="1.20.120.1780">
    <property type="entry name" value="UbiA prenyltransferase"/>
    <property type="match status" value="1"/>
</dbReference>
<dbReference type="HAMAP" id="MF_01635">
    <property type="entry name" value="UbiA"/>
    <property type="match status" value="1"/>
</dbReference>
<dbReference type="InterPro" id="IPR006370">
    <property type="entry name" value="HB_polyprenyltransferase-like"/>
</dbReference>
<dbReference type="InterPro" id="IPR039653">
    <property type="entry name" value="Prenyltransferase"/>
</dbReference>
<dbReference type="InterPro" id="IPR000537">
    <property type="entry name" value="UbiA_prenyltransferase"/>
</dbReference>
<dbReference type="InterPro" id="IPR044878">
    <property type="entry name" value="UbiA_sf"/>
</dbReference>
<dbReference type="NCBIfam" id="TIGR01474">
    <property type="entry name" value="ubiA_proteo"/>
    <property type="match status" value="1"/>
</dbReference>
<dbReference type="PANTHER" id="PTHR11048:SF28">
    <property type="entry name" value="4-HYDROXYBENZOATE POLYPRENYLTRANSFERASE, MITOCHONDRIAL"/>
    <property type="match status" value="1"/>
</dbReference>
<dbReference type="PANTHER" id="PTHR11048">
    <property type="entry name" value="PRENYLTRANSFERASES"/>
    <property type="match status" value="1"/>
</dbReference>
<dbReference type="Pfam" id="PF01040">
    <property type="entry name" value="UbiA"/>
    <property type="match status" value="1"/>
</dbReference>
<keyword id="KW-0997">Cell inner membrane</keyword>
<keyword id="KW-1003">Cell membrane</keyword>
<keyword id="KW-0460">Magnesium</keyword>
<keyword id="KW-0472">Membrane</keyword>
<keyword id="KW-0808">Transferase</keyword>
<keyword id="KW-0812">Transmembrane</keyword>
<keyword id="KW-1133">Transmembrane helix</keyword>
<keyword id="KW-0831">Ubiquinone biosynthesis</keyword>
<sequence>MYQSLLKSLNRLNPRAWDFIQLTRMDKPIGIYLLLWPTLWALWIAGKGSPSLANIVIFVLGVVLTRAGGCVINDWADRKVDGHVKRTAQRPIAAGKISSKEALVFFALLMGVSFLLVLCTNAATIWLSLGGLALAFTYPFMKRYTYYPQVVLGAAFSWGMPMAFTAETGELPATAWLLWIANLLWTVGYDTYYAMTDRDDDLKIGVKSTAILFGDADRVIILTLQVLSLGCLVLAGSKFELGMWFHLGLLVAAGCYAWEFWYTRDRDRMRCFRAFLHNHWAGLAIFVGIVLDYALR</sequence>
<organism>
    <name type="scientific">Pseudomonas fluorescens (strain Pf0-1)</name>
    <dbReference type="NCBI Taxonomy" id="205922"/>
    <lineage>
        <taxon>Bacteria</taxon>
        <taxon>Pseudomonadati</taxon>
        <taxon>Pseudomonadota</taxon>
        <taxon>Gammaproteobacteria</taxon>
        <taxon>Pseudomonadales</taxon>
        <taxon>Pseudomonadaceae</taxon>
        <taxon>Pseudomonas</taxon>
    </lineage>
</organism>
<gene>
    <name evidence="1" type="primary">ubiA</name>
    <name type="ordered locus">Pfl01_5604</name>
</gene>
<feature type="chain" id="PRO_0000262821" description="4-hydroxybenzoate octaprenyltransferase">
    <location>
        <begin position="1"/>
        <end position="296"/>
    </location>
</feature>
<feature type="transmembrane region" description="Helical" evidence="1">
    <location>
        <begin position="28"/>
        <end position="48"/>
    </location>
</feature>
<feature type="transmembrane region" description="Helical" evidence="1">
    <location>
        <begin position="52"/>
        <end position="72"/>
    </location>
</feature>
<feature type="transmembrane region" description="Helical" evidence="1">
    <location>
        <begin position="102"/>
        <end position="122"/>
    </location>
</feature>
<feature type="transmembrane region" description="Helical" evidence="1">
    <location>
        <begin position="146"/>
        <end position="166"/>
    </location>
</feature>
<feature type="transmembrane region" description="Helical" evidence="1">
    <location>
        <begin position="169"/>
        <end position="189"/>
    </location>
</feature>
<feature type="transmembrane region" description="Helical" evidence="1">
    <location>
        <begin position="219"/>
        <end position="239"/>
    </location>
</feature>
<feature type="transmembrane region" description="Helical" evidence="1">
    <location>
        <begin position="241"/>
        <end position="261"/>
    </location>
</feature>
<feature type="transmembrane region" description="Helical" evidence="1">
    <location>
        <begin position="275"/>
        <end position="295"/>
    </location>
</feature>
<proteinExistence type="inferred from homology"/>
<protein>
    <recommendedName>
        <fullName evidence="1">4-hydroxybenzoate octaprenyltransferase</fullName>
        <ecNumber evidence="1">2.5.1.39</ecNumber>
    </recommendedName>
    <alternativeName>
        <fullName evidence="1">4-HB polyprenyltransferase</fullName>
    </alternativeName>
</protein>
<evidence type="ECO:0000255" key="1">
    <source>
        <dbReference type="HAMAP-Rule" id="MF_01635"/>
    </source>
</evidence>
<reference key="1">
    <citation type="journal article" date="2009" name="Genome Biol.">
        <title>Genomic and genetic analyses of diversity and plant interactions of Pseudomonas fluorescens.</title>
        <authorList>
            <person name="Silby M.W."/>
            <person name="Cerdeno-Tarraga A.M."/>
            <person name="Vernikos G.S."/>
            <person name="Giddens S.R."/>
            <person name="Jackson R.W."/>
            <person name="Preston G.M."/>
            <person name="Zhang X.-X."/>
            <person name="Moon C.D."/>
            <person name="Gehrig S.M."/>
            <person name="Godfrey S.A.C."/>
            <person name="Knight C.G."/>
            <person name="Malone J.G."/>
            <person name="Robinson Z."/>
            <person name="Spiers A.J."/>
            <person name="Harris S."/>
            <person name="Challis G.L."/>
            <person name="Yaxley A.M."/>
            <person name="Harris D."/>
            <person name="Seeger K."/>
            <person name="Murphy L."/>
            <person name="Rutter S."/>
            <person name="Squares R."/>
            <person name="Quail M.A."/>
            <person name="Saunders E."/>
            <person name="Mavromatis K."/>
            <person name="Brettin T.S."/>
            <person name="Bentley S.D."/>
            <person name="Hothersall J."/>
            <person name="Stephens E."/>
            <person name="Thomas C.M."/>
            <person name="Parkhill J."/>
            <person name="Levy S.B."/>
            <person name="Rainey P.B."/>
            <person name="Thomson N.R."/>
        </authorList>
    </citation>
    <scope>NUCLEOTIDE SEQUENCE [LARGE SCALE GENOMIC DNA]</scope>
    <source>
        <strain>Pf0-1</strain>
    </source>
</reference>
<comment type="function">
    <text evidence="1">Catalyzes the prenylation of para-hydroxybenzoate (PHB) with an all-trans polyprenyl group. Mediates the second step in the final reaction sequence of ubiquinone-8 (UQ-8) biosynthesis, which is the condensation of the polyisoprenoid side chain with PHB, generating the first membrane-bound Q intermediate 3-octaprenyl-4-hydroxybenzoate.</text>
</comment>
<comment type="catalytic activity">
    <reaction evidence="1">
        <text>all-trans-octaprenyl diphosphate + 4-hydroxybenzoate = 4-hydroxy-3-(all-trans-octaprenyl)benzoate + diphosphate</text>
        <dbReference type="Rhea" id="RHEA:27782"/>
        <dbReference type="ChEBI" id="CHEBI:1617"/>
        <dbReference type="ChEBI" id="CHEBI:17879"/>
        <dbReference type="ChEBI" id="CHEBI:33019"/>
        <dbReference type="ChEBI" id="CHEBI:57711"/>
        <dbReference type="EC" id="2.5.1.39"/>
    </reaction>
</comment>
<comment type="cofactor">
    <cofactor evidence="1">
        <name>Mg(2+)</name>
        <dbReference type="ChEBI" id="CHEBI:18420"/>
    </cofactor>
</comment>
<comment type="pathway">
    <text evidence="1">Cofactor biosynthesis; ubiquinone biosynthesis.</text>
</comment>
<comment type="subcellular location">
    <subcellularLocation>
        <location evidence="1">Cell inner membrane</location>
        <topology evidence="1">Multi-pass membrane protein</topology>
    </subcellularLocation>
</comment>
<comment type="similarity">
    <text evidence="1">Belongs to the UbiA prenyltransferase family.</text>
</comment>
<name>UBIA_PSEPF</name>
<accession>Q3K4G3</accession>